<accession>P13497</accession>
<accession>A8K6F5</accession>
<accession>B2RN46</accession>
<accession>D3DSR0</accession>
<accession>Q13292</accession>
<accession>Q13872</accession>
<accession>Q14874</accession>
<accession>Q99421</accession>
<accession>Q99422</accession>
<accession>Q99423</accession>
<accession>Q9UL38</accession>
<name>BMP1_HUMAN</name>
<keyword id="KW-0002">3D-structure</keyword>
<keyword id="KW-0025">Alternative splicing</keyword>
<keyword id="KW-0106">Calcium</keyword>
<keyword id="KW-0891">Chondrogenesis</keyword>
<keyword id="KW-0165">Cleavage on pair of basic residues</keyword>
<keyword id="KW-0202">Cytokine</keyword>
<keyword id="KW-0217">Developmental protein</keyword>
<keyword id="KW-0221">Differentiation</keyword>
<keyword id="KW-0225">Disease variant</keyword>
<keyword id="KW-1015">Disulfide bond</keyword>
<keyword id="KW-0245">EGF-like domain</keyword>
<keyword id="KW-0272">Extracellular matrix</keyword>
<keyword id="KW-0325">Glycoprotein</keyword>
<keyword id="KW-0333">Golgi apparatus</keyword>
<keyword id="KW-0339">Growth factor</keyword>
<keyword id="KW-0378">Hydrolase</keyword>
<keyword id="KW-0479">Metal-binding</keyword>
<keyword id="KW-0482">Metalloprotease</keyword>
<keyword id="KW-0488">Methylation</keyword>
<keyword id="KW-0892">Osteogenesis</keyword>
<keyword id="KW-1065">Osteogenesis imperfecta</keyword>
<keyword id="KW-0645">Protease</keyword>
<keyword id="KW-1267">Proteomics identification</keyword>
<keyword id="KW-1185">Reference proteome</keyword>
<keyword id="KW-0677">Repeat</keyword>
<keyword id="KW-0964">Secreted</keyword>
<keyword id="KW-0732">Signal</keyword>
<keyword id="KW-0862">Zinc</keyword>
<keyword id="KW-0865">Zymogen</keyword>
<proteinExistence type="evidence at protein level"/>
<feature type="signal peptide" evidence="3">
    <location>
        <begin position="1"/>
        <end position="22"/>
    </location>
</feature>
<feature type="propeptide" id="PRO_0000028889" evidence="8">
    <location>
        <begin position="23"/>
        <end position="120"/>
    </location>
</feature>
<feature type="chain" id="PRO_0000028890" description="Bone morphogenetic protein 1">
    <location>
        <begin position="121"/>
        <end position="986"/>
    </location>
</feature>
<feature type="domain" description="Peptidase M12A" evidence="6">
    <location>
        <begin position="121"/>
        <end position="320"/>
    </location>
</feature>
<feature type="domain" description="CUB 1" evidence="4">
    <location>
        <begin position="322"/>
        <end position="434"/>
    </location>
</feature>
<feature type="domain" description="CUB 2" evidence="4">
    <location>
        <begin position="435"/>
        <end position="546"/>
    </location>
</feature>
<feature type="domain" description="EGF-like 1; calcium-binding" evidence="5">
    <location>
        <begin position="547"/>
        <end position="588"/>
    </location>
</feature>
<feature type="domain" description="CUB 3" evidence="4">
    <location>
        <begin position="591"/>
        <end position="703"/>
    </location>
</feature>
<feature type="domain" description="EGF-like 2; calcium-binding" evidence="5">
    <location>
        <begin position="704"/>
        <end position="743"/>
    </location>
</feature>
<feature type="domain" description="CUB 4" evidence="4">
    <location>
        <begin position="747"/>
        <end position="859"/>
    </location>
</feature>
<feature type="domain" description="CUB 5" evidence="4">
    <location>
        <begin position="860"/>
        <end position="976"/>
    </location>
</feature>
<feature type="region of interest" description="Disordered" evidence="7">
    <location>
        <begin position="83"/>
        <end position="125"/>
    </location>
</feature>
<feature type="compositionally biased region" description="Polar residues" evidence="7">
    <location>
        <begin position="90"/>
        <end position="104"/>
    </location>
</feature>
<feature type="compositionally biased region" description="Basic residues" evidence="7">
    <location>
        <begin position="112"/>
        <end position="122"/>
    </location>
</feature>
<feature type="active site" evidence="6 10">
    <location>
        <position position="214"/>
    </location>
</feature>
<feature type="binding site" evidence="6 10">
    <location>
        <position position="213"/>
    </location>
    <ligand>
        <name>Zn(2+)</name>
        <dbReference type="ChEBI" id="CHEBI:29105"/>
        <note>catalytic</note>
    </ligand>
</feature>
<feature type="binding site" evidence="6 10">
    <location>
        <position position="217"/>
    </location>
    <ligand>
        <name>Zn(2+)</name>
        <dbReference type="ChEBI" id="CHEBI:29105"/>
        <note>catalytic</note>
    </ligand>
</feature>
<feature type="binding site" evidence="6 10">
    <location>
        <position position="223"/>
    </location>
    <ligand>
        <name>Zn(2+)</name>
        <dbReference type="ChEBI" id="CHEBI:29105"/>
        <note>catalytic</note>
    </ligand>
</feature>
<feature type="modified residue" description="Omega-N-methylarginine" evidence="2">
    <location>
        <position position="934"/>
    </location>
</feature>
<feature type="modified residue" description="Omega-N-methylarginine" evidence="2">
    <location>
        <position position="937"/>
    </location>
</feature>
<feature type="glycosylation site" description="N-linked (GlcNAc...) asparagine" evidence="3">
    <location>
        <position position="91"/>
    </location>
</feature>
<feature type="glycosylation site" description="N-linked (GlcNAc...) asparagine" evidence="3">
    <location>
        <position position="142"/>
    </location>
</feature>
<feature type="glycosylation site" description="N-linked (GlcNAc...) asparagine" evidence="3">
    <location>
        <position position="332"/>
    </location>
</feature>
<feature type="glycosylation site" description="N-linked (GlcNAc...) asparagine" evidence="3">
    <location>
        <position position="363"/>
    </location>
</feature>
<feature type="glycosylation site" description="N-linked (GlcNAc...) asparagine" evidence="3">
    <location>
        <position position="599"/>
    </location>
</feature>
<feature type="disulfide bond" evidence="6 10">
    <location>
        <begin position="163"/>
        <end position="319"/>
    </location>
</feature>
<feature type="disulfide bond" evidence="6 10">
    <location>
        <begin position="183"/>
        <end position="205"/>
    </location>
</feature>
<feature type="disulfide bond" evidence="6 10">
    <location>
        <begin position="185"/>
        <end position="186"/>
    </location>
</feature>
<feature type="disulfide bond" evidence="1">
    <location>
        <begin position="322"/>
        <end position="348"/>
    </location>
</feature>
<feature type="disulfide bond" evidence="1">
    <location>
        <begin position="375"/>
        <end position="397"/>
    </location>
</feature>
<feature type="disulfide bond" evidence="1">
    <location>
        <begin position="435"/>
        <end position="461"/>
    </location>
</feature>
<feature type="disulfide bond" evidence="1">
    <location>
        <begin position="488"/>
        <end position="510"/>
    </location>
</feature>
<feature type="disulfide bond" evidence="1">
    <location>
        <begin position="551"/>
        <end position="563"/>
    </location>
</feature>
<feature type="disulfide bond" evidence="1">
    <location>
        <begin position="559"/>
        <end position="572"/>
    </location>
</feature>
<feature type="disulfide bond" evidence="1">
    <location>
        <begin position="574"/>
        <end position="587"/>
    </location>
</feature>
<feature type="disulfide bond" evidence="1">
    <location>
        <begin position="591"/>
        <end position="617"/>
    </location>
</feature>
<feature type="disulfide bond" evidence="1">
    <location>
        <begin position="644"/>
        <end position="666"/>
    </location>
</feature>
<feature type="disulfide bond" evidence="1">
    <location>
        <begin position="707"/>
        <end position="718"/>
    </location>
</feature>
<feature type="disulfide bond" evidence="1">
    <location>
        <begin position="714"/>
        <end position="727"/>
    </location>
</feature>
<feature type="disulfide bond" evidence="1">
    <location>
        <begin position="729"/>
        <end position="742"/>
    </location>
</feature>
<feature type="disulfide bond" evidence="1">
    <location>
        <begin position="747"/>
        <end position="773"/>
    </location>
</feature>
<feature type="disulfide bond" evidence="1">
    <location>
        <begin position="800"/>
        <end position="822"/>
    </location>
</feature>
<feature type="disulfide bond" evidence="1">
    <location>
        <begin position="860"/>
        <end position="890"/>
    </location>
</feature>
<feature type="disulfide bond" evidence="1">
    <location>
        <begin position="917"/>
        <end position="939"/>
    </location>
</feature>
<feature type="splice variant" id="VSP_005463" description="In isoform BMP1-4." evidence="21">
    <original>QEYNFLKMEPQEVESLGETYDFDSIMHYARNTFSRGIFLDTIVPKYEVNGVKPPIGQR</original>
    <variation>VLHSSLLLLSCGSRNGASFPCSLESSTHQALCWTGLFLRPSPFPRLPLAAPRTLRAGV</variation>
    <location>
        <begin position="245"/>
        <end position="302"/>
    </location>
</feature>
<feature type="splice variant" id="VSP_005464" description="In isoform BMP1-4." evidence="21">
    <location>
        <begin position="303"/>
        <end position="986"/>
    </location>
</feature>
<feature type="splice variant" id="VSP_005465" description="In isoform BMP1-5." evidence="19 21">
    <original>AACGGFLTKLNGSITSPGWPKEYPPNKNCIWQLV</original>
    <variation>GCYDLQVGKPLLWDRHCFRLSTHGPEMLGTALRG</variation>
    <location>
        <begin position="589"/>
        <end position="622"/>
    </location>
</feature>
<feature type="splice variant" id="VSP_005466" description="In isoform BMP1-5." evidence="19 21">
    <location>
        <begin position="623"/>
        <end position="986"/>
    </location>
</feature>
<feature type="splice variant" id="VSP_005469" description="In isoform BMP1-7." evidence="22">
    <original>DKDECSKDNGGCQQDCVNTFGSYECQCRSGFVLHDNKHDCKEAGCDHKVTSTSGTITSPNWPDKYPSKKECTWAISSTPGHRVKLTFMEMDIESQPECAYDHLEVFDGRDAKAPVLGRFCG</original>
    <variation>VLEGAGDRHSHLSGLELLLCPHALVDTVPAPPSALHGDTHAHTHTHVHTHCPIAQETCRGPPLGASRLSPQGPGHLTLAPQEGSYLDFWDTHRGDPKPRRRRKSLKTFSLTPATFRGIWAL</variation>
    <location>
        <begin position="703"/>
        <end position="823"/>
    </location>
</feature>
<feature type="splice variant" id="VSP_005461" description="In isoform BMP1-1." evidence="20">
    <original>DKDECSKDNGGCQQDCVNTFGSYECQCR</original>
    <variation>EKRPALQPPRGRPHQLKFRVQKRNRTPQ</variation>
    <location>
        <begin position="703"/>
        <end position="730"/>
    </location>
</feature>
<feature type="splice variant" id="VSP_005467" description="In isoform BMP1-6." evidence="21">
    <original>DKDECSKDNGGCQQD</original>
    <variation>GGELFGLLGHPPRRP</variation>
    <location>
        <begin position="703"/>
        <end position="717"/>
    </location>
</feature>
<feature type="splice variant" id="VSP_005468" description="In isoform BMP1-6." evidence="21">
    <location>
        <begin position="718"/>
        <end position="986"/>
    </location>
</feature>
<feature type="splice variant" id="VSP_005462" description="In isoform BMP1-1." evidence="20">
    <location>
        <begin position="731"/>
        <end position="986"/>
    </location>
</feature>
<feature type="splice variant" id="VSP_005470" description="In isoform BMP1-7." evidence="22">
    <location>
        <begin position="824"/>
        <end position="986"/>
    </location>
</feature>
<feature type="sequence variant" id="VAR_069096" description="In OI13; the mutation leads to severely reduced post-translational N-glycosylation of the protein and impairs protein secretion; leads to both reduced secretion and subsequent reduced processing of the substrates CHRD and COL1A1; dbSNP:rs318240762." evidence="13">
    <original>G</original>
    <variation>R</variation>
    <location>
        <position position="12"/>
    </location>
</feature>
<feature type="sequence variant" id="VAR_036141" description="In a breast cancer sample; somatic mutation." evidence="9">
    <original>D</original>
    <variation>H</variation>
    <location>
        <position position="45"/>
    </location>
</feature>
<feature type="sequence variant" id="VAR_067224" description="In OI13; leads to a protein with deficient procollagen I C-terminal propeptide proteolytic activity; dbSNP:rs398122891." evidence="12">
    <original>F</original>
    <variation>L</variation>
    <location>
        <position position="249"/>
    </location>
</feature>
<feature type="sequence variant" id="VAR_072248" description="In OI13; partial loss of activity; dbSNP:rs786205219." evidence="14">
    <original>M</original>
    <variation>V</variation>
    <location>
        <position position="270"/>
    </location>
</feature>
<feature type="sequence variant" id="VAR_051584" description="In dbSNP:rs11996036.">
    <original>V</original>
    <variation>I</variation>
    <location>
        <position position="719"/>
    </location>
</feature>
<feature type="mutagenesis site" description="Doesn't abolish secretion." evidence="8">
    <original>RR</original>
    <variation>AA</variation>
    <location>
        <begin position="119"/>
        <end position="120"/>
    </location>
</feature>
<feature type="sequence conflict" description="In Ref. 4; AAC41710." evidence="22" ref="4">
    <original>D</original>
    <variation>N</variation>
    <location>
        <position position="748"/>
    </location>
</feature>
<feature type="sequence conflict" description="In Ref. 4; AAC41710." evidence="22" ref="4">
    <original>R</original>
    <variation>S</variation>
    <location>
        <position position="934"/>
    </location>
</feature>
<feature type="strand" evidence="25">
    <location>
        <begin position="122"/>
        <end position="124"/>
    </location>
</feature>
<feature type="helix" evidence="23">
    <location>
        <begin position="126"/>
        <end position="128"/>
    </location>
</feature>
<feature type="helix" evidence="23">
    <location>
        <begin position="131"/>
        <end position="133"/>
    </location>
</feature>
<feature type="strand" evidence="23">
    <location>
        <begin position="134"/>
        <end position="139"/>
    </location>
</feature>
<feature type="helix" evidence="23">
    <location>
        <begin position="145"/>
        <end position="161"/>
    </location>
</feature>
<feature type="strand" evidence="23">
    <location>
        <begin position="165"/>
        <end position="168"/>
    </location>
</feature>
<feature type="strand" evidence="23">
    <location>
        <begin position="173"/>
        <end position="180"/>
    </location>
</feature>
<feature type="strand" evidence="24">
    <location>
        <begin position="183"/>
        <end position="185"/>
    </location>
</feature>
<feature type="strand" evidence="23">
    <location>
        <begin position="194"/>
        <end position="201"/>
    </location>
</feature>
<feature type="helix" evidence="23">
    <location>
        <begin position="203"/>
        <end position="205"/>
    </location>
</feature>
<feature type="helix" evidence="23">
    <location>
        <begin position="208"/>
        <end position="219"/>
    </location>
</feature>
<feature type="helix" evidence="23">
    <location>
        <begin position="224"/>
        <end position="226"/>
    </location>
</feature>
<feature type="helix" evidence="23">
    <location>
        <begin position="230"/>
        <end position="232"/>
    </location>
</feature>
<feature type="strand" evidence="23">
    <location>
        <begin position="234"/>
        <end position="236"/>
    </location>
</feature>
<feature type="helix" evidence="23">
    <location>
        <begin position="238"/>
        <end position="240"/>
    </location>
</feature>
<feature type="helix" evidence="23">
    <location>
        <begin position="246"/>
        <end position="249"/>
    </location>
</feature>
<feature type="helix" evidence="23">
    <location>
        <begin position="254"/>
        <end position="256"/>
    </location>
</feature>
<feature type="turn" evidence="23">
    <location>
        <begin position="274"/>
        <end position="277"/>
    </location>
</feature>
<feature type="strand" evidence="23">
    <location>
        <begin position="278"/>
        <end position="280"/>
    </location>
</feature>
<feature type="strand" evidence="23">
    <location>
        <begin position="285"/>
        <end position="290"/>
    </location>
</feature>
<feature type="helix" evidence="23">
    <location>
        <begin position="307"/>
        <end position="316"/>
    </location>
</feature>
<protein>
    <recommendedName>
        <fullName>Bone morphogenetic protein 1</fullName>
        <shortName>BMP-1</shortName>
        <ecNumber>3.4.24.19</ecNumber>
    </recommendedName>
    <alternativeName>
        <fullName>Mammalian tolloid protein</fullName>
        <shortName>mTld</shortName>
    </alternativeName>
    <alternativeName>
        <fullName>Procollagen C-proteinase</fullName>
        <shortName>PCP</shortName>
    </alternativeName>
</protein>
<gene>
    <name type="primary">BMP1</name>
    <name type="synonym">PCOLC</name>
</gene>
<evidence type="ECO:0000250" key="1"/>
<evidence type="ECO:0000250" key="2">
    <source>
        <dbReference type="UniProtKB" id="Q9WVM6"/>
    </source>
</evidence>
<evidence type="ECO:0000255" key="3"/>
<evidence type="ECO:0000255" key="4">
    <source>
        <dbReference type="PROSITE-ProRule" id="PRU00059"/>
    </source>
</evidence>
<evidence type="ECO:0000255" key="5">
    <source>
        <dbReference type="PROSITE-ProRule" id="PRU00076"/>
    </source>
</evidence>
<evidence type="ECO:0000255" key="6">
    <source>
        <dbReference type="PROSITE-ProRule" id="PRU01211"/>
    </source>
</evidence>
<evidence type="ECO:0000256" key="7">
    <source>
        <dbReference type="SAM" id="MobiDB-lite"/>
    </source>
</evidence>
<evidence type="ECO:0000269" key="8">
    <source>
    </source>
</evidence>
<evidence type="ECO:0000269" key="9">
    <source>
    </source>
</evidence>
<evidence type="ECO:0000269" key="10">
    <source>
    </source>
</evidence>
<evidence type="ECO:0000269" key="11">
    <source>
    </source>
</evidence>
<evidence type="ECO:0000269" key="12">
    <source>
    </source>
</evidence>
<evidence type="ECO:0000269" key="13">
    <source>
    </source>
</evidence>
<evidence type="ECO:0000269" key="14">
    <source>
    </source>
</evidence>
<evidence type="ECO:0000269" key="15">
    <source>
    </source>
</evidence>
<evidence type="ECO:0000269" key="16">
    <source>
    </source>
</evidence>
<evidence type="ECO:0000269" key="17">
    <source>
    </source>
</evidence>
<evidence type="ECO:0000269" key="18">
    <source>
    </source>
</evidence>
<evidence type="ECO:0000303" key="19">
    <source>
    </source>
</evidence>
<evidence type="ECO:0000303" key="20">
    <source>
    </source>
</evidence>
<evidence type="ECO:0000303" key="21">
    <source>
    </source>
</evidence>
<evidence type="ECO:0000305" key="22"/>
<evidence type="ECO:0007829" key="23">
    <source>
        <dbReference type="PDB" id="3EDH"/>
    </source>
</evidence>
<evidence type="ECO:0007829" key="24">
    <source>
        <dbReference type="PDB" id="6BSL"/>
    </source>
</evidence>
<evidence type="ECO:0007829" key="25">
    <source>
        <dbReference type="PDB" id="6BTP"/>
    </source>
</evidence>
<comment type="function">
    <text evidence="15 16 17 18">Metalloprotease that plays key roles in regulating the formation of the extracellular matrix (ECM) via processing of various precursor proteins into mature functional enzymes or structural proteins (PubMed:33206546). Thereby participates in several developmental and physiological processes such as cartilage and bone formation, muscle growth and homeostasis, wound healing and tissue repair (PubMed:32636307, PubMed:33169406). Roles in ECM formation include cleavage of the C-terminal propeptides from procollagens such as procollagen I, II and III or the proteolytic activation of the enzyme lysyl oxidase LOX, necessary to formation of covalent cross-links in collagen and elastic fibers (PubMed:31152061, PubMed:33206546). Additional substrates include matricellular thrombospondin-1/THBS1 whose cleavage leads to cell adhesion disruption and TGF-beta activation (PubMed:32636307).</text>
</comment>
<comment type="function">
    <molecule>Isoform BMP1-3</molecule>
    <text evidence="11">Plays an important role in bone repair by acting as a coactivator of BMP7.</text>
</comment>
<comment type="catalytic activity">
    <reaction>
        <text>Cleavage of the C-terminal propeptide at Ala-|-Asp in type I and II procollagens and at Arg-|-Asp in type III.</text>
        <dbReference type="EC" id="3.4.24.19"/>
    </reaction>
</comment>
<comment type="cofactor">
    <cofactor evidence="6 10">
        <name>Zn(2+)</name>
        <dbReference type="ChEBI" id="CHEBI:29105"/>
    </cofactor>
    <text evidence="6 10">Binds 1 zinc ion per subunit.</text>
</comment>
<comment type="activity regulation">
    <text>Activity is increased by the procollagen C-endopeptidase enhancer protein.</text>
</comment>
<comment type="subunit">
    <text evidence="1">Interacts with POSTN, the interaction promotes deposition on the extracellular matrix.</text>
</comment>
<comment type="interaction">
    <interactant intactId="EBI-489827">
        <id>P13497</id>
    </interactant>
    <interactant intactId="EBI-489827">
        <id>P13497</id>
        <label>BMP1</label>
    </interactant>
    <organismsDiffer>false</organismsDiffer>
    <experiments>4</experiments>
</comment>
<comment type="interaction">
    <interactant intactId="EBI-489827">
        <id>P13497</id>
    </interactant>
    <interactant intactId="EBI-947551">
        <id>Q9H2X0</id>
        <label>CHRD</label>
    </interactant>
    <organismsDiffer>false</organismsDiffer>
    <experiments>2</experiments>
</comment>
<comment type="interaction">
    <interactant intactId="EBI-489827">
        <id>P13497</id>
    </interactant>
    <interactant intactId="EBI-2464511">
        <id>P20908</id>
        <label>COL5A1</label>
    </interactant>
    <organismsDiffer>false</organismsDiffer>
    <experiments>2</experiments>
</comment>
<comment type="interaction">
    <interactant intactId="EBI-489827">
        <id>P13497</id>
    </interactant>
    <interactant intactId="EBI-8542977">
        <id>O14793</id>
        <label>MSTN</label>
    </interactant>
    <organismsDiffer>false</organismsDiffer>
    <experiments>3</experiments>
</comment>
<comment type="interaction">
    <interactant intactId="EBI-489827">
        <id>P13497</id>
    </interactant>
    <interactant intactId="EBI-8869614">
        <id>Q15113</id>
        <label>PCOLCE</label>
    </interactant>
    <organismsDiffer>false</organismsDiffer>
    <experiments>3</experiments>
</comment>
<comment type="interaction">
    <interactant intactId="EBI-12509497">
        <id>P13497-2</id>
    </interactant>
    <interactant intactId="EBI-9663608">
        <id>P07585</id>
        <label>DCN</label>
    </interactant>
    <organismsDiffer>false</organismsDiffer>
    <experiments>2</experiments>
</comment>
<comment type="interaction">
    <interactant intactId="EBI-12509497">
        <id>P13497-2</id>
    </interactant>
    <interactant intactId="EBI-15892646">
        <id>P97299</id>
        <label>Sfrp2</label>
    </interactant>
    <organismsDiffer>true</organismsDiffer>
    <experiments>2</experiments>
</comment>
<comment type="subcellular location">
    <subcellularLocation>
        <location evidence="8">Golgi apparatus</location>
        <location evidence="8">trans-Golgi network</location>
    </subcellularLocation>
    <subcellularLocation>
        <location evidence="8">Secreted</location>
        <location evidence="8">Extracellular space</location>
        <location evidence="8">Extracellular matrix</location>
    </subcellularLocation>
    <subcellularLocation>
        <location evidence="18">Secreted</location>
    </subcellularLocation>
    <text evidence="1">Co-localizes with POSTN in the Golgi.</text>
</comment>
<comment type="subcellular location">
    <molecule>Isoform BMP1-3</molecule>
    <subcellularLocation>
        <location evidence="11">Secreted</location>
    </subcellularLocation>
</comment>
<comment type="alternative products">
    <event type="alternative splicing"/>
    <isoform>
        <id>P13497-1</id>
        <name>BMP1-3</name>
        <sequence type="displayed"/>
    </isoform>
    <isoform>
        <id>P13497-2</id>
        <name>BMP1-1</name>
        <sequence type="described" ref="VSP_005461 VSP_005462"/>
    </isoform>
    <isoform>
        <id>P13497-7</id>
        <name>BMP1-2</name>
        <sequence type="not described"/>
    </isoform>
    <isoform>
        <id>P13497-3</id>
        <name>BMP1-4</name>
        <sequence type="described" ref="VSP_005463 VSP_005464"/>
    </isoform>
    <isoform>
        <id>P13497-4</id>
        <name>BMP1-5</name>
        <sequence type="described" ref="VSP_005465 VSP_005466"/>
    </isoform>
    <isoform>
        <id>P13497-5</id>
        <name>BMP1-6</name>
        <sequence type="described" ref="VSP_005467 VSP_005468"/>
    </isoform>
    <isoform>
        <id>P13497-6</id>
        <name>BMP1-7</name>
        <sequence type="described" ref="VSP_005469 VSP_005470"/>
    </isoform>
</comment>
<comment type="tissue specificity">
    <text>Ubiquitous.</text>
</comment>
<comment type="PTM">
    <text evidence="8">Proteolytically activated in the trans-Golgi network by furin-like/paired basic proprotein convertases, cleavage is not required for secretion.</text>
</comment>
<comment type="disease" evidence="12 13 14">
    <disease id="DI-03557">
        <name>Osteogenesis imperfecta 13</name>
        <acronym>OI13</acronym>
        <description>An autosomal recessive form of osteogenesis imperfecta, a disorder of bone formation characterized by low bone mass, bone fragility and susceptibility to fractures after minimal trauma. Disease severity ranges from very mild forms without fractures to intrauterine fractures and perinatal lethality. Extraskeletal manifestations, which affect a variable number of patients, are dentinogenesis imperfecta, hearing loss, and blue sclerae. OI13 is characterized by normal teeth, faint blue sclerae, severe growth deficiency, severe bone deformity, and recurrent fractures affecting both upper and lower limbs.</description>
        <dbReference type="MIM" id="614856"/>
    </disease>
    <text>The disease is caused by variants affecting the gene represented in this entry.</text>
</comment>
<comment type="miscellaneous">
    <molecule>Isoform BMP1-4</molecule>
    <text evidence="22">May be produced at very low levels due to a premature stop codon in the mRNA, leading to nonsense-mediated mRNA decay.</text>
</comment>
<comment type="miscellaneous">
    <molecule>Isoform BMP1-5</molecule>
    <text evidence="22">May be produced at very low levels due to a premature stop codon in the mRNA, leading to nonsense-mediated mRNA decay.</text>
</comment>
<comment type="miscellaneous">
    <molecule>Isoform BMP1-6</molecule>
    <text evidence="22">May be produced at very low levels due to a premature stop codon in the mRNA, leading to nonsense-mediated mRNA decay.</text>
</comment>
<sequence>MPGVARLPLLLGLLLLPRPGRPLDLADYTYDLAEEDDSEPLNYKDPCKAAAFLGDIALDEEDLRAFQVQQAVDLRRHTARKSSIKAAVPGNTSTPSCQSTNGQPQRGACGRWRGRSRSRRAATSRPERVWPDGVIPFVIGGNFTGSQRAVFRQAMRHWEKHTCVTFLERTDEDSYIVFTYRPCGCCSYVGRRGGGPQAISIGKNCDKFGIVVHELGHVVGFWHEHTRPDRDRHVSIVRENIQPGQEYNFLKMEPQEVESLGETYDFDSIMHYARNTFSRGIFLDTIVPKYEVNGVKPPIGQRTRLSKGDIAQARKLYKCPACGETLQDSTGNFSSPEYPNGYSAHMHCVWRISVTPGEKIILNFTSLDLYRSRLCWYDYVEVRDGFWRKAPLRGRFCGSKLPEPIVSTDSRLWVEFRSSSNWVGKGFFAVYEAICGGDVKKDYGHIQSPNYPDDYRPSKVCIWRIQVSEGFHVGLTFQSFEIERHDSCAYDYLEVRDGHSESSTLIGRYCGYEKPDDIKSTSSRLWLKFVSDGSINKAGFAVNFFKEVDECSRPNRGGCEQRCLNTLGSYKCSCDPGYELAPDKRRCEAACGGFLTKLNGSITSPGWPKEYPPNKNCIWQLVAPTQYRISLQFDFFETEGNDVCKYDFVEVRSGLTADSKLHGKFCGSEKPEVITSQYNNMRVEFKSDNTVSKKGFKAHFFSDKDECSKDNGGCQQDCVNTFGSYECQCRSGFVLHDNKHDCKEAGCDHKVTSTSGTITSPNWPDKYPSKKECTWAISSTPGHRVKLTFMEMDIESQPECAYDHLEVFDGRDAKAPVLGRFCGSKKPEPVLATGSRMFLRFYSDNSVQRKGFQASHATECGGQVRADVKTKDLYSHAQFGDNNYPGGVDCEWVIVAEEGYGVELVFQTFEVEEETDCGYDYMELFDGYDSTAPRLGRYCGSGPPEEVYSAGDSVLVKFHSDDTITKKGFHLRYTSTKFQDTLHSRK</sequence>
<dbReference type="EC" id="3.4.24.19"/>
<dbReference type="EMBL" id="U50330">
    <property type="protein sequence ID" value="AAA93462.1"/>
    <property type="molecule type" value="mRNA"/>
</dbReference>
<dbReference type="EMBL" id="M22488">
    <property type="protein sequence ID" value="AAA51833.1"/>
    <property type="molecule type" value="mRNA"/>
</dbReference>
<dbReference type="EMBL" id="Y08723">
    <property type="protein sequence ID" value="CAA69973.1"/>
    <property type="molecule type" value="mRNA"/>
</dbReference>
<dbReference type="EMBL" id="Y08724">
    <property type="protein sequence ID" value="CAA69974.1"/>
    <property type="molecule type" value="mRNA"/>
</dbReference>
<dbReference type="EMBL" id="Y08725">
    <property type="protein sequence ID" value="CAA69975.1"/>
    <property type="molecule type" value="mRNA"/>
</dbReference>
<dbReference type="EMBL" id="L35278">
    <property type="protein sequence ID" value="AAC41703.1"/>
    <property type="molecule type" value="mRNA"/>
</dbReference>
<dbReference type="EMBL" id="L35279">
    <property type="protein sequence ID" value="AAC41710.1"/>
    <property type="molecule type" value="mRNA"/>
</dbReference>
<dbReference type="EMBL" id="AK291620">
    <property type="protein sequence ID" value="BAF84309.1"/>
    <property type="molecule type" value="mRNA"/>
</dbReference>
<dbReference type="EMBL" id="CH471080">
    <property type="protein sequence ID" value="EAW63698.1"/>
    <property type="molecule type" value="Genomic_DNA"/>
</dbReference>
<dbReference type="EMBL" id="CH471080">
    <property type="protein sequence ID" value="EAW63703.1"/>
    <property type="molecule type" value="Genomic_DNA"/>
</dbReference>
<dbReference type="EMBL" id="CH471080">
    <property type="protein sequence ID" value="EAW63704.1"/>
    <property type="molecule type" value="Genomic_DNA"/>
</dbReference>
<dbReference type="EMBL" id="BC136679">
    <property type="protein sequence ID" value="AAI36680.1"/>
    <property type="molecule type" value="mRNA"/>
</dbReference>
<dbReference type="CCDS" id="CCDS34856.1">
    <molecule id="P13497-2"/>
</dbReference>
<dbReference type="CCDS" id="CCDS6026.1">
    <molecule id="P13497-1"/>
</dbReference>
<dbReference type="PIR" id="A37278">
    <property type="entry name" value="BMHU1"/>
</dbReference>
<dbReference type="PIR" id="A58788">
    <property type="entry name" value="A58788"/>
</dbReference>
<dbReference type="PIR" id="B58788">
    <property type="entry name" value="B58788"/>
</dbReference>
<dbReference type="RefSeq" id="NP_001190.1">
    <molecule id="P13497-2"/>
    <property type="nucleotide sequence ID" value="NM_001199.4"/>
</dbReference>
<dbReference type="RefSeq" id="NP_006120.1">
    <molecule id="P13497-1"/>
    <property type="nucleotide sequence ID" value="NM_006129.5"/>
</dbReference>
<dbReference type="RefSeq" id="XP_011542919.1">
    <property type="nucleotide sequence ID" value="XM_011544617.1"/>
</dbReference>
<dbReference type="RefSeq" id="XP_016869227.1">
    <property type="nucleotide sequence ID" value="XM_017013738.1"/>
</dbReference>
<dbReference type="PDB" id="3EDG">
    <property type="method" value="X-ray"/>
    <property type="resolution" value="1.27 A"/>
    <property type="chains" value="A=121-321"/>
</dbReference>
<dbReference type="PDB" id="3EDH">
    <property type="method" value="X-ray"/>
    <property type="resolution" value="1.25 A"/>
    <property type="chains" value="A=121-321"/>
</dbReference>
<dbReference type="PDB" id="6BSL">
    <property type="method" value="X-ray"/>
    <property type="resolution" value="1.45 A"/>
    <property type="chains" value="A/B=121-321"/>
</dbReference>
<dbReference type="PDB" id="6BSM">
    <property type="method" value="X-ray"/>
    <property type="resolution" value="2.33 A"/>
    <property type="chains" value="A=121-320"/>
</dbReference>
<dbReference type="PDB" id="6BTN">
    <property type="method" value="X-ray"/>
    <property type="resolution" value="2.05 A"/>
    <property type="chains" value="A/B=121-321"/>
</dbReference>
<dbReference type="PDB" id="6BTO">
    <property type="method" value="X-ray"/>
    <property type="resolution" value="2.05 A"/>
    <property type="chains" value="A/B=121-321"/>
</dbReference>
<dbReference type="PDB" id="6BTP">
    <property type="method" value="X-ray"/>
    <property type="resolution" value="1.93 A"/>
    <property type="chains" value="A/B=121-320"/>
</dbReference>
<dbReference type="PDB" id="6BTQ">
    <property type="method" value="X-ray"/>
    <property type="resolution" value="1.75 A"/>
    <property type="chains" value="A/B=121-321"/>
</dbReference>
<dbReference type="PDBsum" id="3EDG"/>
<dbReference type="PDBsum" id="3EDH"/>
<dbReference type="PDBsum" id="6BSL"/>
<dbReference type="PDBsum" id="6BSM"/>
<dbReference type="PDBsum" id="6BTN"/>
<dbReference type="PDBsum" id="6BTO"/>
<dbReference type="PDBsum" id="6BTP"/>
<dbReference type="PDBsum" id="6BTQ"/>
<dbReference type="SMR" id="P13497"/>
<dbReference type="BioGRID" id="107117">
    <property type="interactions" value="145"/>
</dbReference>
<dbReference type="DIP" id="DIP-33403N"/>
<dbReference type="ELM" id="P13497"/>
<dbReference type="FunCoup" id="P13497">
    <property type="interactions" value="352"/>
</dbReference>
<dbReference type="IntAct" id="P13497">
    <property type="interactions" value="108"/>
</dbReference>
<dbReference type="MINT" id="P13497"/>
<dbReference type="STRING" id="9606.ENSP00000305714"/>
<dbReference type="BindingDB" id="P13497"/>
<dbReference type="ChEMBL" id="CHEMBL3898"/>
<dbReference type="GuidetoPHARMACOLOGY" id="2333"/>
<dbReference type="MEROPS" id="M12.005"/>
<dbReference type="GlyConnect" id="1045">
    <property type="glycosylation" value="5 N-Linked glycans (2 sites)"/>
</dbReference>
<dbReference type="GlyCosmos" id="P13497">
    <property type="glycosylation" value="5 sites, 4 glycans"/>
</dbReference>
<dbReference type="GlyGen" id="P13497">
    <property type="glycosylation" value="10 sites, 13 N-linked glycans (4 sites)"/>
</dbReference>
<dbReference type="iPTMnet" id="P13497"/>
<dbReference type="PhosphoSitePlus" id="P13497"/>
<dbReference type="BioMuta" id="BMP1"/>
<dbReference type="DMDM" id="13124688"/>
<dbReference type="jPOST" id="P13497"/>
<dbReference type="MassIVE" id="P13497"/>
<dbReference type="PaxDb" id="9606-ENSP00000305714"/>
<dbReference type="PeptideAtlas" id="P13497"/>
<dbReference type="ProteomicsDB" id="52914">
    <molecule id="P13497-1"/>
</dbReference>
<dbReference type="ProteomicsDB" id="52915">
    <molecule id="P13497-2"/>
</dbReference>
<dbReference type="ProteomicsDB" id="52916">
    <molecule id="P13497-3"/>
</dbReference>
<dbReference type="ProteomicsDB" id="52917">
    <molecule id="P13497-4"/>
</dbReference>
<dbReference type="ProteomicsDB" id="52918">
    <molecule id="P13497-5"/>
</dbReference>
<dbReference type="ProteomicsDB" id="52919">
    <molecule id="P13497-6"/>
</dbReference>
<dbReference type="Pumba" id="P13497"/>
<dbReference type="Antibodypedia" id="2912">
    <property type="antibodies" value="327 antibodies from 36 providers"/>
</dbReference>
<dbReference type="DNASU" id="649"/>
<dbReference type="Ensembl" id="ENST00000306349.13">
    <molecule id="P13497-2"/>
    <property type="protein sequence ID" value="ENSP00000306121.8"/>
    <property type="gene ID" value="ENSG00000168487.20"/>
</dbReference>
<dbReference type="Ensembl" id="ENST00000306385.10">
    <molecule id="P13497-1"/>
    <property type="protein sequence ID" value="ENSP00000305714.5"/>
    <property type="gene ID" value="ENSG00000168487.20"/>
</dbReference>
<dbReference type="Ensembl" id="ENST00000471755.5">
    <molecule id="P13497-4"/>
    <property type="protein sequence ID" value="ENSP00000428665.1"/>
    <property type="gene ID" value="ENSG00000168487.20"/>
</dbReference>
<dbReference type="Ensembl" id="ENST00000520970.5">
    <molecule id="P13497-2"/>
    <property type="protein sequence ID" value="ENSP00000428332.1"/>
    <property type="gene ID" value="ENSG00000168487.20"/>
</dbReference>
<dbReference type="Ensembl" id="ENST00000521385.5">
    <molecule id="P13497-5"/>
    <property type="protein sequence ID" value="ENSP00000430406.1"/>
    <property type="gene ID" value="ENSG00000168487.20"/>
</dbReference>
<dbReference type="GeneID" id="649"/>
<dbReference type="KEGG" id="hsa:649"/>
<dbReference type="MANE-Select" id="ENST00000306385.10">
    <property type="protein sequence ID" value="ENSP00000305714.5"/>
    <property type="RefSeq nucleotide sequence ID" value="NM_006129.5"/>
    <property type="RefSeq protein sequence ID" value="NP_006120.1"/>
</dbReference>
<dbReference type="UCSC" id="uc003xbb.4">
    <molecule id="P13497-1"/>
    <property type="organism name" value="human"/>
</dbReference>
<dbReference type="AGR" id="HGNC:1067"/>
<dbReference type="CTD" id="649"/>
<dbReference type="DisGeNET" id="649"/>
<dbReference type="GeneCards" id="BMP1"/>
<dbReference type="HGNC" id="HGNC:1067">
    <property type="gene designation" value="BMP1"/>
</dbReference>
<dbReference type="HPA" id="ENSG00000168487">
    <property type="expression patterns" value="Low tissue specificity"/>
</dbReference>
<dbReference type="MalaCards" id="BMP1"/>
<dbReference type="MIM" id="112264">
    <property type="type" value="gene"/>
</dbReference>
<dbReference type="MIM" id="614856">
    <property type="type" value="phenotype"/>
</dbReference>
<dbReference type="neXtProt" id="NX_P13497"/>
<dbReference type="OpenTargets" id="ENSG00000168487"/>
<dbReference type="Orphanet" id="314029">
    <property type="disease" value="High bone mass osteogenesis imperfecta"/>
</dbReference>
<dbReference type="Orphanet" id="216812">
    <property type="disease" value="Osteogenesis imperfecta type 3"/>
</dbReference>
<dbReference type="PharmGKB" id="PA25377"/>
<dbReference type="VEuPathDB" id="HostDB:ENSG00000168487"/>
<dbReference type="eggNOG" id="KOG3714">
    <property type="taxonomic scope" value="Eukaryota"/>
</dbReference>
<dbReference type="GeneTree" id="ENSGT00940000157176"/>
<dbReference type="HOGENOM" id="CLU_005140_0_0_1"/>
<dbReference type="InParanoid" id="P13497"/>
<dbReference type="OMA" id="RTVQTIN"/>
<dbReference type="OrthoDB" id="431034at2759"/>
<dbReference type="PAN-GO" id="P13497">
    <property type="GO annotations" value="4 GO annotations based on evolutionary models"/>
</dbReference>
<dbReference type="PhylomeDB" id="P13497"/>
<dbReference type="TreeFam" id="TF314351"/>
<dbReference type="BRENDA" id="2.7.11.4">
    <property type="organism ID" value="2681"/>
</dbReference>
<dbReference type="BRENDA" id="3.4.24.19">
    <property type="organism ID" value="2681"/>
</dbReference>
<dbReference type="BRENDA" id="3.4.24.21">
    <property type="organism ID" value="2681"/>
</dbReference>
<dbReference type="PathwayCommons" id="P13497"/>
<dbReference type="Reactome" id="R-HSA-1474228">
    <property type="pathway name" value="Degradation of the extracellular matrix"/>
</dbReference>
<dbReference type="Reactome" id="R-HSA-1650814">
    <property type="pathway name" value="Collagen biosynthesis and modifying enzymes"/>
</dbReference>
<dbReference type="Reactome" id="R-HSA-2214320">
    <property type="pathway name" value="Anchoring fibril formation"/>
</dbReference>
<dbReference type="Reactome" id="R-HSA-2243919">
    <property type="pathway name" value="Crosslinking of collagen fibrils"/>
</dbReference>
<dbReference type="Reactome" id="R-HSA-8963896">
    <molecule id="P13497-3"/>
    <property type="pathway name" value="HDL assembly"/>
</dbReference>
<dbReference type="SignaLink" id="P13497"/>
<dbReference type="SIGNOR" id="P13497"/>
<dbReference type="BioGRID-ORCS" id="649">
    <property type="hits" value="9 hits in 1159 CRISPR screens"/>
</dbReference>
<dbReference type="ChiTaRS" id="BMP1">
    <property type="organism name" value="human"/>
</dbReference>
<dbReference type="EvolutionaryTrace" id="P13497"/>
<dbReference type="GeneWiki" id="Bone_morphogenetic_protein_1"/>
<dbReference type="GenomeRNAi" id="649"/>
<dbReference type="Pharos" id="P13497">
    <property type="development level" value="Tchem"/>
</dbReference>
<dbReference type="PRO" id="PR:P13497"/>
<dbReference type="Proteomes" id="UP000005640">
    <property type="component" value="Chromosome 8"/>
</dbReference>
<dbReference type="RNAct" id="P13497">
    <property type="molecule type" value="protein"/>
</dbReference>
<dbReference type="Bgee" id="ENSG00000168487">
    <property type="expression patterns" value="Expressed in stromal cell of endometrium and 158 other cell types or tissues"/>
</dbReference>
<dbReference type="ExpressionAtlas" id="P13497">
    <property type="expression patterns" value="baseline and differential"/>
</dbReference>
<dbReference type="GO" id="GO:0005576">
    <property type="term" value="C:extracellular region"/>
    <property type="evidence" value="ECO:0000304"/>
    <property type="project" value="Reactome"/>
</dbReference>
<dbReference type="GO" id="GO:0005615">
    <property type="term" value="C:extracellular space"/>
    <property type="evidence" value="ECO:0000318"/>
    <property type="project" value="GO_Central"/>
</dbReference>
<dbReference type="GO" id="GO:0005794">
    <property type="term" value="C:Golgi apparatus"/>
    <property type="evidence" value="ECO:0007669"/>
    <property type="project" value="UniProtKB-SubCell"/>
</dbReference>
<dbReference type="GO" id="GO:0031982">
    <property type="term" value="C:vesicle"/>
    <property type="evidence" value="ECO:0007669"/>
    <property type="project" value="Ensembl"/>
</dbReference>
<dbReference type="GO" id="GO:0005509">
    <property type="term" value="F:calcium ion binding"/>
    <property type="evidence" value="ECO:0007669"/>
    <property type="project" value="InterPro"/>
</dbReference>
<dbReference type="GO" id="GO:0005125">
    <property type="term" value="F:cytokine activity"/>
    <property type="evidence" value="ECO:0007669"/>
    <property type="project" value="UniProtKB-KW"/>
</dbReference>
<dbReference type="GO" id="GO:0008083">
    <property type="term" value="F:growth factor activity"/>
    <property type="evidence" value="ECO:0007669"/>
    <property type="project" value="UniProtKB-KW"/>
</dbReference>
<dbReference type="GO" id="GO:0042802">
    <property type="term" value="F:identical protein binding"/>
    <property type="evidence" value="ECO:0000353"/>
    <property type="project" value="IntAct"/>
</dbReference>
<dbReference type="GO" id="GO:0004222">
    <property type="term" value="F:metalloendopeptidase activity"/>
    <property type="evidence" value="ECO:0000318"/>
    <property type="project" value="GO_Central"/>
</dbReference>
<dbReference type="GO" id="GO:0008237">
    <property type="term" value="F:metallopeptidase activity"/>
    <property type="evidence" value="ECO:0000303"/>
    <property type="project" value="UniProtKB"/>
</dbReference>
<dbReference type="GO" id="GO:0008233">
    <property type="term" value="F:peptidase activity"/>
    <property type="evidence" value="ECO:0000314"/>
    <property type="project" value="UniProtKB"/>
</dbReference>
<dbReference type="GO" id="GO:0004252">
    <property type="term" value="F:serine-type endopeptidase activity"/>
    <property type="evidence" value="ECO:0000304"/>
    <property type="project" value="Reactome"/>
</dbReference>
<dbReference type="GO" id="GO:0008270">
    <property type="term" value="F:zinc ion binding"/>
    <property type="evidence" value="ECO:0007669"/>
    <property type="project" value="InterPro"/>
</dbReference>
<dbReference type="GO" id="GO:0001502">
    <property type="term" value="P:cartilage condensation"/>
    <property type="evidence" value="ECO:0000304"/>
    <property type="project" value="ProtInc"/>
</dbReference>
<dbReference type="GO" id="GO:0030154">
    <property type="term" value="P:cell differentiation"/>
    <property type="evidence" value="ECO:0007669"/>
    <property type="project" value="UniProtKB-KW"/>
</dbReference>
<dbReference type="GO" id="GO:0030199">
    <property type="term" value="P:collagen fibril organization"/>
    <property type="evidence" value="ECO:0000304"/>
    <property type="project" value="Reactome"/>
</dbReference>
<dbReference type="GO" id="GO:0009953">
    <property type="term" value="P:dorsal/ventral pattern formation"/>
    <property type="evidence" value="ECO:0000318"/>
    <property type="project" value="GO_Central"/>
</dbReference>
<dbReference type="GO" id="GO:0001503">
    <property type="term" value="P:ossification"/>
    <property type="evidence" value="ECO:0007669"/>
    <property type="project" value="UniProtKB-KW"/>
</dbReference>
<dbReference type="GO" id="GO:0061036">
    <property type="term" value="P:positive regulation of cartilage development"/>
    <property type="evidence" value="ECO:0000314"/>
    <property type="project" value="MGI"/>
</dbReference>
<dbReference type="GO" id="GO:0016485">
    <property type="term" value="P:protein processing"/>
    <property type="evidence" value="ECO:0000318"/>
    <property type="project" value="GO_Central"/>
</dbReference>
<dbReference type="GO" id="GO:0006508">
    <property type="term" value="P:proteolysis"/>
    <property type="evidence" value="ECO:0000314"/>
    <property type="project" value="UniProtKB"/>
</dbReference>
<dbReference type="GO" id="GO:0001501">
    <property type="term" value="P:skeletal system development"/>
    <property type="evidence" value="ECO:0000304"/>
    <property type="project" value="ProtInc"/>
</dbReference>
<dbReference type="CDD" id="cd00041">
    <property type="entry name" value="CUB"/>
    <property type="match status" value="5"/>
</dbReference>
<dbReference type="CDD" id="cd00054">
    <property type="entry name" value="EGF_CA"/>
    <property type="match status" value="1"/>
</dbReference>
<dbReference type="CDD" id="cd04281">
    <property type="entry name" value="ZnMc_BMP1_TLD"/>
    <property type="match status" value="1"/>
</dbReference>
<dbReference type="FunFam" id="2.10.25.10:FF:000022">
    <property type="entry name" value="Metalloendopeptidase"/>
    <property type="match status" value="2"/>
</dbReference>
<dbReference type="FunFam" id="2.60.120.290:FF:000004">
    <property type="entry name" value="Metalloendopeptidase"/>
    <property type="match status" value="1"/>
</dbReference>
<dbReference type="FunFam" id="2.60.120.290:FF:000007">
    <property type="entry name" value="Metalloendopeptidase"/>
    <property type="match status" value="1"/>
</dbReference>
<dbReference type="FunFam" id="2.60.120.290:FF:000009">
    <property type="entry name" value="Metalloendopeptidase"/>
    <property type="match status" value="1"/>
</dbReference>
<dbReference type="FunFam" id="2.60.120.290:FF:000011">
    <property type="entry name" value="Metalloendopeptidase"/>
    <property type="match status" value="1"/>
</dbReference>
<dbReference type="FunFam" id="2.60.120.290:FF:000014">
    <property type="entry name" value="Metalloendopeptidase"/>
    <property type="match status" value="1"/>
</dbReference>
<dbReference type="FunFam" id="3.40.390.10:FF:000004">
    <property type="entry name" value="Metalloendopeptidase"/>
    <property type="match status" value="1"/>
</dbReference>
<dbReference type="Gene3D" id="3.40.390.10">
    <property type="entry name" value="Collagenase (Catalytic Domain)"/>
    <property type="match status" value="1"/>
</dbReference>
<dbReference type="Gene3D" id="2.10.25.10">
    <property type="entry name" value="Laminin"/>
    <property type="match status" value="2"/>
</dbReference>
<dbReference type="Gene3D" id="2.60.120.290">
    <property type="entry name" value="Spermadhesin, CUB domain"/>
    <property type="match status" value="5"/>
</dbReference>
<dbReference type="InterPro" id="IPR015446">
    <property type="entry name" value="BMP_1/tolloid-like"/>
</dbReference>
<dbReference type="InterPro" id="IPR000859">
    <property type="entry name" value="CUB_dom"/>
</dbReference>
<dbReference type="InterPro" id="IPR001881">
    <property type="entry name" value="EGF-like_Ca-bd_dom"/>
</dbReference>
<dbReference type="InterPro" id="IPR000742">
    <property type="entry name" value="EGF-like_dom"/>
</dbReference>
<dbReference type="InterPro" id="IPR000152">
    <property type="entry name" value="EGF-type_Asp/Asn_hydroxyl_site"/>
</dbReference>
<dbReference type="InterPro" id="IPR018097">
    <property type="entry name" value="EGF_Ca-bd_CS"/>
</dbReference>
<dbReference type="InterPro" id="IPR009030">
    <property type="entry name" value="Growth_fac_rcpt_cys_sf"/>
</dbReference>
<dbReference type="InterPro" id="IPR024079">
    <property type="entry name" value="MetalloPept_cat_dom_sf"/>
</dbReference>
<dbReference type="InterPro" id="IPR049883">
    <property type="entry name" value="NOTCH1_EGF-like"/>
</dbReference>
<dbReference type="InterPro" id="IPR001506">
    <property type="entry name" value="Peptidase_M12A"/>
</dbReference>
<dbReference type="InterPro" id="IPR006026">
    <property type="entry name" value="Peptidase_Metallo"/>
</dbReference>
<dbReference type="InterPro" id="IPR035914">
    <property type="entry name" value="Sperma_CUB_dom_sf"/>
</dbReference>
<dbReference type="InterPro" id="IPR034036">
    <property type="entry name" value="ZnMP_TLD/BMP1"/>
</dbReference>
<dbReference type="PANTHER" id="PTHR24255">
    <property type="entry name" value="COMPLEMENT COMPONENT 1, S SUBCOMPONENT-RELATED"/>
    <property type="match status" value="1"/>
</dbReference>
<dbReference type="PANTHER" id="PTHR24255:SF31">
    <property type="entry name" value="CUBILIN-LIKE PROTEIN"/>
    <property type="match status" value="1"/>
</dbReference>
<dbReference type="Pfam" id="PF01400">
    <property type="entry name" value="Astacin"/>
    <property type="match status" value="1"/>
</dbReference>
<dbReference type="Pfam" id="PF00431">
    <property type="entry name" value="CUB"/>
    <property type="match status" value="5"/>
</dbReference>
<dbReference type="Pfam" id="PF07645">
    <property type="entry name" value="EGF_CA"/>
    <property type="match status" value="1"/>
</dbReference>
<dbReference type="Pfam" id="PF14670">
    <property type="entry name" value="FXa_inhibition"/>
    <property type="match status" value="1"/>
</dbReference>
<dbReference type="PIRSF" id="PIRSF001199">
    <property type="entry name" value="BMP_1/tolloid-like"/>
    <property type="match status" value="1"/>
</dbReference>
<dbReference type="PRINTS" id="PR00480">
    <property type="entry name" value="ASTACIN"/>
</dbReference>
<dbReference type="SMART" id="SM00042">
    <property type="entry name" value="CUB"/>
    <property type="match status" value="5"/>
</dbReference>
<dbReference type="SMART" id="SM00181">
    <property type="entry name" value="EGF"/>
    <property type="match status" value="2"/>
</dbReference>
<dbReference type="SMART" id="SM00179">
    <property type="entry name" value="EGF_CA"/>
    <property type="match status" value="2"/>
</dbReference>
<dbReference type="SMART" id="SM00235">
    <property type="entry name" value="ZnMc"/>
    <property type="match status" value="1"/>
</dbReference>
<dbReference type="SUPFAM" id="SSF57184">
    <property type="entry name" value="Growth factor receptor domain"/>
    <property type="match status" value="1"/>
</dbReference>
<dbReference type="SUPFAM" id="SSF55486">
    <property type="entry name" value="Metalloproteases ('zincins'), catalytic domain"/>
    <property type="match status" value="1"/>
</dbReference>
<dbReference type="SUPFAM" id="SSF49854">
    <property type="entry name" value="Spermadhesin, CUB domain"/>
    <property type="match status" value="5"/>
</dbReference>
<dbReference type="PROSITE" id="PS51864">
    <property type="entry name" value="ASTACIN"/>
    <property type="match status" value="1"/>
</dbReference>
<dbReference type="PROSITE" id="PS00010">
    <property type="entry name" value="ASX_HYDROXYL"/>
    <property type="match status" value="2"/>
</dbReference>
<dbReference type="PROSITE" id="PS01180">
    <property type="entry name" value="CUB"/>
    <property type="match status" value="5"/>
</dbReference>
<dbReference type="PROSITE" id="PS01186">
    <property type="entry name" value="EGF_2"/>
    <property type="match status" value="2"/>
</dbReference>
<dbReference type="PROSITE" id="PS50026">
    <property type="entry name" value="EGF_3"/>
    <property type="match status" value="2"/>
</dbReference>
<dbReference type="PROSITE" id="PS01187">
    <property type="entry name" value="EGF_CA"/>
    <property type="match status" value="2"/>
</dbReference>
<dbReference type="PROSITE" id="PS00142">
    <property type="entry name" value="ZINC_PROTEASE"/>
    <property type="match status" value="1"/>
</dbReference>
<organism>
    <name type="scientific">Homo sapiens</name>
    <name type="common">Human</name>
    <dbReference type="NCBI Taxonomy" id="9606"/>
    <lineage>
        <taxon>Eukaryota</taxon>
        <taxon>Metazoa</taxon>
        <taxon>Chordata</taxon>
        <taxon>Craniata</taxon>
        <taxon>Vertebrata</taxon>
        <taxon>Euteleostomi</taxon>
        <taxon>Mammalia</taxon>
        <taxon>Eutheria</taxon>
        <taxon>Euarchontoglires</taxon>
        <taxon>Primates</taxon>
        <taxon>Haplorrhini</taxon>
        <taxon>Catarrhini</taxon>
        <taxon>Hominidae</taxon>
        <taxon>Homo</taxon>
    </lineage>
</organism>
<reference key="1">
    <citation type="journal article" date="1996" name="Proc. Natl. Acad. Sci. U.S.A.">
        <title>The C-proteinase that processes procollagens to fibrillar collagens is identical to the protein previously identified as bone morphogenic protein-1.</title>
        <authorList>
            <person name="Li S.W."/>
            <person name="Sieron A.L."/>
            <person name="Fertala A."/>
            <person name="Hojima Y."/>
            <person name="Arnold W.V."/>
            <person name="Prockop D.J."/>
        </authorList>
    </citation>
    <scope>NUCLEOTIDE SEQUENCE [MRNA] (ISOFORM BMP1-3)</scope>
    <source>
        <tissue>Skin</tissue>
    </source>
</reference>
<reference key="2">
    <citation type="journal article" date="1988" name="Science">
        <title>Novel regulators of bone formation: molecular clones and activities.</title>
        <authorList>
            <person name="Wozney J.M."/>
            <person name="Rosen V."/>
            <person name="Celeste A.J."/>
            <person name="Mitsock L.M."/>
            <person name="Whitters M.J."/>
            <person name="Kriz R.W."/>
            <person name="Hewick R.M."/>
            <person name="Wang E.A."/>
        </authorList>
    </citation>
    <scope>NUCLEOTIDE SEQUENCE [MRNA] (ISOFORM BMP1-1)</scope>
</reference>
<reference key="3">
    <citation type="journal article" date="1998" name="J. Mol. Med.">
        <title>Three alternatively spliced variants of the gene coding for the human bone morphogenetic protein-1.</title>
        <authorList>
            <person name="Janitz M."/>
            <person name="Heiser V."/>
            <person name="Boettcher U."/>
            <person name="Landt O."/>
            <person name="Lauster R."/>
        </authorList>
    </citation>
    <scope>NUCLEOTIDE SEQUENCE [MRNA] (ISOFORMS BMP1-4; BMP1-5 AND BMP1-6)</scope>
    <source>
        <tissue>Placenta</tissue>
    </source>
</reference>
<reference key="4">
    <citation type="journal article" date="1994" name="J. Biol. Chem.">
        <title>Bone morphogenetic protein-1 and a mammalian tolloid homologue (mTld) are encoded by alternatively spliced transcripts which are differentially expressed in some tissues.</title>
        <authorList>
            <person name="Takahara K."/>
            <person name="Lyons G.E."/>
            <person name="Greenspan D.S."/>
        </authorList>
    </citation>
    <scope>PARTIAL NUCLEOTIDE SEQUENCE [MRNA] (ISOFORMS BMP1-3 AND BMP1-7)</scope>
    <source>
        <tissue>Placenta</tissue>
    </source>
</reference>
<reference key="5">
    <citation type="submission" date="2005-09" db="EMBL/GenBank/DDBJ databases">
        <authorList>
            <person name="Mural R.J."/>
            <person name="Istrail S."/>
            <person name="Sutton G.G."/>
            <person name="Florea L."/>
            <person name="Halpern A.L."/>
            <person name="Mobarry C.M."/>
            <person name="Lippert R."/>
            <person name="Walenz B."/>
            <person name="Shatkay H."/>
            <person name="Dew I."/>
            <person name="Miller J.R."/>
            <person name="Flanigan M.J."/>
            <person name="Edwards N.J."/>
            <person name="Bolanos R."/>
            <person name="Fasulo D."/>
            <person name="Halldorsson B.V."/>
            <person name="Hannenhalli S."/>
            <person name="Turner R."/>
            <person name="Yooseph S."/>
            <person name="Lu F."/>
            <person name="Nusskern D.R."/>
            <person name="Shue B.C."/>
            <person name="Zheng X.H."/>
            <person name="Zhong F."/>
            <person name="Delcher A.L."/>
            <person name="Huson D.H."/>
            <person name="Kravitz S.A."/>
            <person name="Mouchard L."/>
            <person name="Reinert K."/>
            <person name="Remington K.A."/>
            <person name="Clark A.G."/>
            <person name="Waterman M.S."/>
            <person name="Eichler E.E."/>
            <person name="Adams M.D."/>
            <person name="Hunkapiller M.W."/>
            <person name="Myers E.W."/>
            <person name="Venter J.C."/>
        </authorList>
    </citation>
    <scope>NUCLEOTIDE SEQUENCE [LARGE SCALE GENOMIC DNA]</scope>
</reference>
<reference key="6">
    <citation type="journal article" date="2004" name="Nat. Genet.">
        <title>Complete sequencing and characterization of 21,243 full-length human cDNAs.</title>
        <authorList>
            <person name="Ota T."/>
            <person name="Suzuki Y."/>
            <person name="Nishikawa T."/>
            <person name="Otsuki T."/>
            <person name="Sugiyama T."/>
            <person name="Irie R."/>
            <person name="Wakamatsu A."/>
            <person name="Hayashi K."/>
            <person name="Sato H."/>
            <person name="Nagai K."/>
            <person name="Kimura K."/>
            <person name="Makita H."/>
            <person name="Sekine M."/>
            <person name="Obayashi M."/>
            <person name="Nishi T."/>
            <person name="Shibahara T."/>
            <person name="Tanaka T."/>
            <person name="Ishii S."/>
            <person name="Yamamoto J."/>
            <person name="Saito K."/>
            <person name="Kawai Y."/>
            <person name="Isono Y."/>
            <person name="Nakamura Y."/>
            <person name="Nagahari K."/>
            <person name="Murakami K."/>
            <person name="Yasuda T."/>
            <person name="Iwayanagi T."/>
            <person name="Wagatsuma M."/>
            <person name="Shiratori A."/>
            <person name="Sudo H."/>
            <person name="Hosoiri T."/>
            <person name="Kaku Y."/>
            <person name="Kodaira H."/>
            <person name="Kondo H."/>
            <person name="Sugawara M."/>
            <person name="Takahashi M."/>
            <person name="Kanda K."/>
            <person name="Yokoi T."/>
            <person name="Furuya T."/>
            <person name="Kikkawa E."/>
            <person name="Omura Y."/>
            <person name="Abe K."/>
            <person name="Kamihara K."/>
            <person name="Katsuta N."/>
            <person name="Sato K."/>
            <person name="Tanikawa M."/>
            <person name="Yamazaki M."/>
            <person name="Ninomiya K."/>
            <person name="Ishibashi T."/>
            <person name="Yamashita H."/>
            <person name="Murakawa K."/>
            <person name="Fujimori K."/>
            <person name="Tanai H."/>
            <person name="Kimata M."/>
            <person name="Watanabe M."/>
            <person name="Hiraoka S."/>
            <person name="Chiba Y."/>
            <person name="Ishida S."/>
            <person name="Ono Y."/>
            <person name="Takiguchi S."/>
            <person name="Watanabe S."/>
            <person name="Yosida M."/>
            <person name="Hotuta T."/>
            <person name="Kusano J."/>
            <person name="Kanehori K."/>
            <person name="Takahashi-Fujii A."/>
            <person name="Hara H."/>
            <person name="Tanase T.-O."/>
            <person name="Nomura Y."/>
            <person name="Togiya S."/>
            <person name="Komai F."/>
            <person name="Hara R."/>
            <person name="Takeuchi K."/>
            <person name="Arita M."/>
            <person name="Imose N."/>
            <person name="Musashino K."/>
            <person name="Yuuki H."/>
            <person name="Oshima A."/>
            <person name="Sasaki N."/>
            <person name="Aotsuka S."/>
            <person name="Yoshikawa Y."/>
            <person name="Matsunawa H."/>
            <person name="Ichihara T."/>
            <person name="Shiohata N."/>
            <person name="Sano S."/>
            <person name="Moriya S."/>
            <person name="Momiyama H."/>
            <person name="Satoh N."/>
            <person name="Takami S."/>
            <person name="Terashima Y."/>
            <person name="Suzuki O."/>
            <person name="Nakagawa S."/>
            <person name="Senoh A."/>
            <person name="Mizoguchi H."/>
            <person name="Goto Y."/>
            <person name="Shimizu F."/>
            <person name="Wakebe H."/>
            <person name="Hishigaki H."/>
            <person name="Watanabe T."/>
            <person name="Sugiyama A."/>
            <person name="Takemoto M."/>
            <person name="Kawakami B."/>
            <person name="Yamazaki M."/>
            <person name="Watanabe K."/>
            <person name="Kumagai A."/>
            <person name="Itakura S."/>
            <person name="Fukuzumi Y."/>
            <person name="Fujimori Y."/>
            <person name="Komiyama M."/>
            <person name="Tashiro H."/>
            <person name="Tanigami A."/>
            <person name="Fujiwara T."/>
            <person name="Ono T."/>
            <person name="Yamada K."/>
            <person name="Fujii Y."/>
            <person name="Ozaki K."/>
            <person name="Hirao M."/>
            <person name="Ohmori Y."/>
            <person name="Kawabata A."/>
            <person name="Hikiji T."/>
            <person name="Kobatake N."/>
            <person name="Inagaki H."/>
            <person name="Ikema Y."/>
            <person name="Okamoto S."/>
            <person name="Okitani R."/>
            <person name="Kawakami T."/>
            <person name="Noguchi S."/>
            <person name="Itoh T."/>
            <person name="Shigeta K."/>
            <person name="Senba T."/>
            <person name="Matsumura K."/>
            <person name="Nakajima Y."/>
            <person name="Mizuno T."/>
            <person name="Morinaga M."/>
            <person name="Sasaki M."/>
            <person name="Togashi T."/>
            <person name="Oyama M."/>
            <person name="Hata H."/>
            <person name="Watanabe M."/>
            <person name="Komatsu T."/>
            <person name="Mizushima-Sugano J."/>
            <person name="Satoh T."/>
            <person name="Shirai Y."/>
            <person name="Takahashi Y."/>
            <person name="Nakagawa K."/>
            <person name="Okumura K."/>
            <person name="Nagase T."/>
            <person name="Nomura N."/>
            <person name="Kikuchi H."/>
            <person name="Masuho Y."/>
            <person name="Yamashita R."/>
            <person name="Nakai K."/>
            <person name="Yada T."/>
            <person name="Nakamura Y."/>
            <person name="Ohara O."/>
            <person name="Isogai T."/>
            <person name="Sugano S."/>
        </authorList>
    </citation>
    <scope>NUCLEOTIDE SEQUENCE [LARGE SCALE MRNA] (ISOFORM BMP1-5)</scope>
    <source>
        <tissue>Placenta</tissue>
    </source>
</reference>
<reference key="7">
    <citation type="journal article" date="2004" name="Genome Res.">
        <title>The status, quality, and expansion of the NIH full-length cDNA project: the Mammalian Gene Collection (MGC).</title>
        <authorList>
            <consortium name="The MGC Project Team"/>
        </authorList>
    </citation>
    <scope>NUCLEOTIDE SEQUENCE [LARGE SCALE MRNA] (ISOFORM BMP1-3)</scope>
    <source>
        <tissue>Brain</tissue>
    </source>
</reference>
<reference key="8">
    <citation type="journal article" date="2001" name="J. Biol. Chem.">
        <title>Identification of amino acid residues in bone morphogenetic protein-1 important for procollagen C-proteinase activity.</title>
        <authorList>
            <person name="Garrigue-Antar L."/>
            <person name="Barker C."/>
            <person name="Kadler K.E."/>
        </authorList>
    </citation>
    <scope>DISULFIDE BOND AT 183-CYS--CYS-186</scope>
</reference>
<reference key="9">
    <citation type="journal article" date="2003" name="J. Biol. Chem.">
        <title>Paired basic/Furin-like proprotein convertase cleavage of Pro-BMP-1 in the trans-Golgi network.</title>
        <authorList>
            <person name="Leighton M."/>
            <person name="Kadler K.E."/>
        </authorList>
    </citation>
    <scope>SUBCELLULAR LOCATION</scope>
    <scope>PROTEOLYTIC CLEAVAGE</scope>
    <scope>MUTAGENESIS OF 119-ARG--ARG-120</scope>
</reference>
<reference key="10">
    <citation type="journal article" date="2004" name="Genome Biol.">
        <title>An unappreciated role for RNA surveillance.</title>
        <authorList>
            <person name="Hillman R.T."/>
            <person name="Green R.E."/>
            <person name="Brenner S.E."/>
        </authorList>
    </citation>
    <scope>SPLICE ISOFORM(S) THAT ARE POTENTIAL NMD TARGET(S)</scope>
</reference>
<reference key="11">
    <citation type="journal article" date="2011" name="Biochem. Biophys. Res. Commun.">
        <title>Bone morphogenetic protein (BMP)1-3 enhances bone repair.</title>
        <authorList>
            <person name="Grgurevic L."/>
            <person name="Macek B."/>
            <person name="Mercep M."/>
            <person name="Jelic M."/>
            <person name="Smoljanovic T."/>
            <person name="Erjavec I."/>
            <person name="Dumic-Cule I."/>
            <person name="Prgomet S."/>
            <person name="Durdevic D."/>
            <person name="Vnuk D."/>
            <person name="Lipar M."/>
            <person name="Stejskal M."/>
            <person name="Kufner V."/>
            <person name="Brkljacic J."/>
            <person name="Maticic D."/>
            <person name="Vukicevic S."/>
        </authorList>
    </citation>
    <scope>FUNCTION (ISOFORM BMP1-3)</scope>
    <scope>SUBCELLULAR LOCATION (ISOFORM BMP1-3)</scope>
</reference>
<reference key="12">
    <citation type="journal article" date="2019" name="J. Biol. Chem.">
        <title>Differential cleavage of lysyl oxidase by the metalloproteinases BMP1 and ADAMTS2/14 regulates collagen binding through a tyrosine sulfate domain.</title>
        <authorList>
            <person name="Rosell-Garcia T."/>
            <person name="Paradela A."/>
            <person name="Bravo G."/>
            <person name="Dupont L."/>
            <person name="Bekhouche M."/>
            <person name="Colige A."/>
            <person name="Rodriguez-Pascual F."/>
        </authorList>
    </citation>
    <scope>FUNCTION</scope>
</reference>
<reference key="13">
    <citation type="journal article" date="2020" name="Sci. Signal.">
        <title>BMP-1 disrupts cell adhesion and enhances TGF-beta activation through cleavage of the matricellular protein thrombospondin-1.</title>
        <authorList>
            <person name="Anastasi C."/>
            <person name="Rousselle P."/>
            <person name="Talantikite M."/>
            <person name="Tessier A."/>
            <person name="Cluzel C."/>
            <person name="Bachmann A."/>
            <person name="Mariano N."/>
            <person name="Dussoyer M."/>
            <person name="Alcaraz L.B."/>
            <person name="Fortin L."/>
            <person name="Aubert A."/>
            <person name="Delolme F."/>
            <person name="El Kholti N."/>
            <person name="Armengaud J."/>
            <person name="Fournie P."/>
            <person name="Auxenfans C."/>
            <person name="Valcourt U."/>
            <person name="Goff S.V."/>
            <person name="Moali C."/>
        </authorList>
    </citation>
    <scope>FUNCTION</scope>
</reference>
<reference key="14">
    <citation type="journal article" date="2021" name="J. Periodontology">
        <title>Proteinase bone morphogenetic protein 1, but not tolloid-like 1, plays a dominant role in maintaining periodontal homeostasis.</title>
        <authorList>
            <person name="Wang J."/>
            <person name="Xie X."/>
            <person name="Muench N.A."/>
            <person name="Massoudi D."/>
            <person name="Xu C."/>
            <person name="Greenspan D.S."/>
            <person name="Feng J.Q."/>
        </authorList>
    </citation>
    <scope>FUNCTION</scope>
</reference>
<reference key="15">
    <citation type="journal article" date="2021" name="Am. J. Physiol.">
        <title>Extracellular BMP1 is the major proteinase for COOH-terminal proteolysis of type I procollagen in lung fibroblasts.</title>
        <authorList>
            <person name="N'Diaye E.N."/>
            <person name="Cook R."/>
            <person name="Wang H."/>
            <person name="Wu P."/>
            <person name="LaCanna R."/>
            <person name="Wu C."/>
            <person name="Ye Z."/>
            <person name="Seshasayee D."/>
            <person name="Hazen M."/>
            <person name="Lin W."/>
            <person name="Tyagi T."/>
            <person name="Hotzel I."/>
            <person name="Tam L."/>
            <person name="Newman R."/>
            <person name="Roose-Girma M."/>
            <person name="Wolters P.J."/>
            <person name="Ding N."/>
        </authorList>
    </citation>
    <scope>FUNCTION</scope>
    <scope>SUBCELLULAR LOCATION</scope>
</reference>
<reference key="16">
    <citation type="journal article" date="2008" name="J. Mol. Biol.">
        <title>Structural basis for the substrate specificity of bone morphogenetic protein 1/tolloid-like metalloproteases.</title>
        <authorList>
            <person name="Mac Sweeney A."/>
            <person name="Gil-Parrado S."/>
            <person name="Vinzenz D."/>
            <person name="Bernardi A."/>
            <person name="Hein A."/>
            <person name="Bodendorf U."/>
            <person name="Erbel P."/>
            <person name="Logel C."/>
            <person name="Gerhartz B."/>
        </authorList>
    </citation>
    <scope>X-RAY CRYSTALLOGRAPHY (1.25 ANGSTROMS) OF 121-321 IN COMPLEX WITH ZINC IONS</scope>
    <scope>ZINC-BINDING SITES</scope>
    <scope>COFACTOR</scope>
    <scope>ACTIVE SITE</scope>
    <scope>DISULFIDE BONDS</scope>
</reference>
<reference key="17">
    <citation type="journal article" date="2006" name="Science">
        <title>The consensus coding sequences of human breast and colorectal cancers.</title>
        <authorList>
            <person name="Sjoeblom T."/>
            <person name="Jones S."/>
            <person name="Wood L.D."/>
            <person name="Parsons D.W."/>
            <person name="Lin J."/>
            <person name="Barber T.D."/>
            <person name="Mandelker D."/>
            <person name="Leary R.J."/>
            <person name="Ptak J."/>
            <person name="Silliman N."/>
            <person name="Szabo S."/>
            <person name="Buckhaults P."/>
            <person name="Farrell C."/>
            <person name="Meeh P."/>
            <person name="Markowitz S.D."/>
            <person name="Willis J."/>
            <person name="Dawson D."/>
            <person name="Willson J.K.V."/>
            <person name="Gazdar A.F."/>
            <person name="Hartigan J."/>
            <person name="Wu L."/>
            <person name="Liu C."/>
            <person name="Parmigiani G."/>
            <person name="Park B.H."/>
            <person name="Bachman K.E."/>
            <person name="Papadopoulos N."/>
            <person name="Vogelstein B."/>
            <person name="Kinzler K.W."/>
            <person name="Velculescu V.E."/>
        </authorList>
    </citation>
    <scope>VARIANT [LARGE SCALE ANALYSIS] HIS-45</scope>
</reference>
<reference key="18">
    <citation type="journal article" date="2012" name="Am. J. Hum. Genet.">
        <title>Attenuated BMP1 function compromises osteogenesis, leading to bone fragility in humans and zebrafish.</title>
        <authorList>
            <person name="Asharani P.V."/>
            <person name="Keupp K."/>
            <person name="Semler O."/>
            <person name="Wang W."/>
            <person name="Li Y."/>
            <person name="Thiele H."/>
            <person name="Yigit G."/>
            <person name="Pohl E."/>
            <person name="Becker J."/>
            <person name="Frommolt P."/>
            <person name="Sonntag C."/>
            <person name="Altmuller J."/>
            <person name="Zimmermann K."/>
            <person name="Greenspan D.S."/>
            <person name="Akarsu N.A."/>
            <person name="Netzer C."/>
            <person name="Schonau E."/>
            <person name="Wirth R."/>
            <person name="Hammerschmidt M."/>
            <person name="Nurnberg P."/>
            <person name="Wollnik B."/>
            <person name="Carney T.J."/>
        </authorList>
    </citation>
    <scope>VARIANT OI13 ARG-12</scope>
    <scope>CHARACTERIZATION OF VARIANT OI13 ARG-12</scope>
    <scope>INVOLVEMENT IN OI13</scope>
</reference>
<reference key="19">
    <citation type="journal article" date="2012" name="Hum. Mutat.">
        <title>Identification of a mutation causing deficient BMP1/mTLD proteolytic activity in autosomal recessive osteogenesis imperfecta.</title>
        <authorList>
            <person name="Martinez-Glez V."/>
            <person name="Valencia M."/>
            <person name="Caparros-Martin J.A."/>
            <person name="Aglan M."/>
            <person name="Temtamy S."/>
            <person name="Tenorio J."/>
            <person name="Pulido V."/>
            <person name="Lindert U."/>
            <person name="Rohrbach M."/>
            <person name="Eyre D."/>
            <person name="Giunta C."/>
            <person name="Lapunzina P."/>
            <person name="Ruiz-Perez V.L."/>
        </authorList>
    </citation>
    <scope>VARIANT OI13 LEU-249</scope>
    <scope>CHARACTERIZATION OF VARIANT OI13 LEU-249</scope>
</reference>
<reference key="20">
    <citation type="journal article" date="2015" name="Hum. Mutat.">
        <title>Identification and in vivo functional characterization of novel compound heterozygous BMP1 variants in osteogenesis imperfecta.</title>
        <authorList>
            <person name="Cho S.Y."/>
            <person name="Asharani P.V."/>
            <person name="Kim O.H."/>
            <person name="Iida A."/>
            <person name="Miyake N."/>
            <person name="Matsumoto N."/>
            <person name="Nishimura G."/>
            <person name="Ki C.S."/>
            <person name="Hong G."/>
            <person name="Kim S.J."/>
            <person name="Sohn Y.B."/>
            <person name="Park S.W."/>
            <person name="Lee J."/>
            <person name="Kwun Y."/>
            <person name="Carney T.J."/>
            <person name="Huh R."/>
            <person name="Ikegawa S."/>
            <person name="Jin D.K."/>
        </authorList>
    </citation>
    <scope>VARIANT OI13 VAL-270</scope>
    <scope>CHARACTERIZATION OF VARIANT OI13 VAL-270</scope>
</reference>